<keyword id="KW-1003">Cell membrane</keyword>
<keyword id="KW-0378">Hydrolase</keyword>
<keyword id="KW-0472">Membrane</keyword>
<keyword id="KW-0479">Metal-binding</keyword>
<keyword id="KW-0482">Metalloprotease</keyword>
<keyword id="KW-0645">Protease</keyword>
<keyword id="KW-0812">Transmembrane</keyword>
<keyword id="KW-1133">Transmembrane helix</keyword>
<keyword id="KW-0862">Zinc</keyword>
<accession>C1CEN8</accession>
<gene>
    <name evidence="1" type="primary">htpX</name>
    <name type="ordered locus">SPJ_1198</name>
</gene>
<evidence type="ECO:0000255" key="1">
    <source>
        <dbReference type="HAMAP-Rule" id="MF_00188"/>
    </source>
</evidence>
<sequence>MLFDQIASNKRKTWILLLVFFLLLALVGYAVGYLFIRSGLGGLVIALIIGFIYALSMIFQSTEIVMSMNGAREVDEQTAPDLYHVVEDMALVAQIPMPRVFIIDDPALNAFATGSNPQNAAVAATSGLLAIMNREELEAVMGHEVSHIRNYDIRISTIAVALASAITMLSSMAGRMMWWGGAGRRRSDDDRDGNGLEIIMLVVSLLAIVLAPLAATLVQLAISRQREFLADASSVELTRNPQGMINALDKLDNSKPMSRHVDDASSALYINDPKKGGGFQKLFYTHPPISERIERLKHM</sequence>
<protein>
    <recommendedName>
        <fullName evidence="1">Protease HtpX homolog</fullName>
        <ecNumber evidence="1">3.4.24.-</ecNumber>
    </recommendedName>
</protein>
<comment type="cofactor">
    <cofactor evidence="1">
        <name>Zn(2+)</name>
        <dbReference type="ChEBI" id="CHEBI:29105"/>
    </cofactor>
    <text evidence="1">Binds 1 zinc ion per subunit.</text>
</comment>
<comment type="subcellular location">
    <subcellularLocation>
        <location evidence="1">Cell membrane</location>
        <topology evidence="1">Multi-pass membrane protein</topology>
    </subcellularLocation>
</comment>
<comment type="similarity">
    <text evidence="1">Belongs to the peptidase M48B family.</text>
</comment>
<feature type="chain" id="PRO_1000192748" description="Protease HtpX homolog">
    <location>
        <begin position="1"/>
        <end position="299"/>
    </location>
</feature>
<feature type="transmembrane region" description="Helical" evidence="1">
    <location>
        <begin position="15"/>
        <end position="35"/>
    </location>
</feature>
<feature type="transmembrane region" description="Helical" evidence="1">
    <location>
        <begin position="39"/>
        <end position="59"/>
    </location>
</feature>
<feature type="transmembrane region" description="Helical" evidence="1">
    <location>
        <begin position="158"/>
        <end position="178"/>
    </location>
</feature>
<feature type="transmembrane region" description="Helical" evidence="1">
    <location>
        <begin position="198"/>
        <end position="218"/>
    </location>
</feature>
<feature type="active site" evidence="1">
    <location>
        <position position="144"/>
    </location>
</feature>
<feature type="binding site" evidence="1">
    <location>
        <position position="143"/>
    </location>
    <ligand>
        <name>Zn(2+)</name>
        <dbReference type="ChEBI" id="CHEBI:29105"/>
        <note>catalytic</note>
    </ligand>
</feature>
<feature type="binding site" evidence="1">
    <location>
        <position position="147"/>
    </location>
    <ligand>
        <name>Zn(2+)</name>
        <dbReference type="ChEBI" id="CHEBI:29105"/>
        <note>catalytic</note>
    </ligand>
</feature>
<feature type="binding site" evidence="1">
    <location>
        <position position="227"/>
    </location>
    <ligand>
        <name>Zn(2+)</name>
        <dbReference type="ChEBI" id="CHEBI:29105"/>
        <note>catalytic</note>
    </ligand>
</feature>
<dbReference type="EC" id="3.4.24.-" evidence="1"/>
<dbReference type="EMBL" id="CP000919">
    <property type="protein sequence ID" value="ACO18483.1"/>
    <property type="molecule type" value="Genomic_DNA"/>
</dbReference>
<dbReference type="RefSeq" id="WP_000895733.1">
    <property type="nucleotide sequence ID" value="NC_012466.1"/>
</dbReference>
<dbReference type="KEGG" id="sjj:SPJ_1198"/>
<dbReference type="HOGENOM" id="CLU_042266_2_1_9"/>
<dbReference type="Proteomes" id="UP000002206">
    <property type="component" value="Chromosome"/>
</dbReference>
<dbReference type="GO" id="GO:0005886">
    <property type="term" value="C:plasma membrane"/>
    <property type="evidence" value="ECO:0007669"/>
    <property type="project" value="UniProtKB-SubCell"/>
</dbReference>
<dbReference type="GO" id="GO:0004222">
    <property type="term" value="F:metalloendopeptidase activity"/>
    <property type="evidence" value="ECO:0007669"/>
    <property type="project" value="UniProtKB-UniRule"/>
</dbReference>
<dbReference type="GO" id="GO:0008270">
    <property type="term" value="F:zinc ion binding"/>
    <property type="evidence" value="ECO:0007669"/>
    <property type="project" value="UniProtKB-UniRule"/>
</dbReference>
<dbReference type="GO" id="GO:0006508">
    <property type="term" value="P:proteolysis"/>
    <property type="evidence" value="ECO:0007669"/>
    <property type="project" value="UniProtKB-KW"/>
</dbReference>
<dbReference type="CDD" id="cd07340">
    <property type="entry name" value="M48B_Htpx_like"/>
    <property type="match status" value="1"/>
</dbReference>
<dbReference type="Gene3D" id="3.30.2010.10">
    <property type="entry name" value="Metalloproteases ('zincins'), catalytic domain"/>
    <property type="match status" value="1"/>
</dbReference>
<dbReference type="HAMAP" id="MF_00188">
    <property type="entry name" value="Pept_M48_protease_HtpX"/>
    <property type="match status" value="1"/>
</dbReference>
<dbReference type="InterPro" id="IPR050083">
    <property type="entry name" value="HtpX_protease"/>
</dbReference>
<dbReference type="InterPro" id="IPR022919">
    <property type="entry name" value="Pept_M48_protease_HtpX"/>
</dbReference>
<dbReference type="InterPro" id="IPR001915">
    <property type="entry name" value="Peptidase_M48"/>
</dbReference>
<dbReference type="NCBIfam" id="NF003425">
    <property type="entry name" value="PRK04897.1"/>
    <property type="match status" value="1"/>
</dbReference>
<dbReference type="PANTHER" id="PTHR43221">
    <property type="entry name" value="PROTEASE HTPX"/>
    <property type="match status" value="1"/>
</dbReference>
<dbReference type="PANTHER" id="PTHR43221:SF1">
    <property type="entry name" value="PROTEASE HTPX"/>
    <property type="match status" value="1"/>
</dbReference>
<dbReference type="Pfam" id="PF01435">
    <property type="entry name" value="Peptidase_M48"/>
    <property type="match status" value="1"/>
</dbReference>
<reference key="1">
    <citation type="journal article" date="2010" name="Genome Biol.">
        <title>Structure and dynamics of the pan-genome of Streptococcus pneumoniae and closely related species.</title>
        <authorList>
            <person name="Donati C."/>
            <person name="Hiller N.L."/>
            <person name="Tettelin H."/>
            <person name="Muzzi A."/>
            <person name="Croucher N.J."/>
            <person name="Angiuoli S.V."/>
            <person name="Oggioni M."/>
            <person name="Dunning Hotopp J.C."/>
            <person name="Hu F.Z."/>
            <person name="Riley D.R."/>
            <person name="Covacci A."/>
            <person name="Mitchell T.J."/>
            <person name="Bentley S.D."/>
            <person name="Kilian M."/>
            <person name="Ehrlich G.D."/>
            <person name="Rappuoli R."/>
            <person name="Moxon E.R."/>
            <person name="Masignani V."/>
        </authorList>
    </citation>
    <scope>NUCLEOTIDE SEQUENCE [LARGE SCALE GENOMIC DNA]</scope>
    <source>
        <strain>JJA</strain>
    </source>
</reference>
<organism>
    <name type="scientific">Streptococcus pneumoniae (strain JJA)</name>
    <dbReference type="NCBI Taxonomy" id="488222"/>
    <lineage>
        <taxon>Bacteria</taxon>
        <taxon>Bacillati</taxon>
        <taxon>Bacillota</taxon>
        <taxon>Bacilli</taxon>
        <taxon>Lactobacillales</taxon>
        <taxon>Streptococcaceae</taxon>
        <taxon>Streptococcus</taxon>
    </lineage>
</organism>
<name>HTPX_STRZJ</name>
<proteinExistence type="inferred from homology"/>